<organism>
    <name type="scientific">Latilactobacillus sakei subsp. sakei (strain 23K)</name>
    <name type="common">Lactobacillus sakei subsp. sakei</name>
    <dbReference type="NCBI Taxonomy" id="314315"/>
    <lineage>
        <taxon>Bacteria</taxon>
        <taxon>Bacillati</taxon>
        <taxon>Bacillota</taxon>
        <taxon>Bacilli</taxon>
        <taxon>Lactobacillales</taxon>
        <taxon>Lactobacillaceae</taxon>
        <taxon>Latilactobacillus</taxon>
    </lineage>
</organism>
<accession>Q38XM8</accession>
<proteinExistence type="inferred from homology"/>
<dbReference type="EC" id="2.4.1.227" evidence="1"/>
<dbReference type="EMBL" id="CR936503">
    <property type="protein sequence ID" value="CAI55052.1"/>
    <property type="molecule type" value="Genomic_DNA"/>
</dbReference>
<dbReference type="SMR" id="Q38XM8"/>
<dbReference type="STRING" id="314315.LCA_0748"/>
<dbReference type="CAZy" id="GT28">
    <property type="family name" value="Glycosyltransferase Family 28"/>
</dbReference>
<dbReference type="KEGG" id="lsa:LCA_0748"/>
<dbReference type="eggNOG" id="COG0707">
    <property type="taxonomic scope" value="Bacteria"/>
</dbReference>
<dbReference type="HOGENOM" id="CLU_037404_0_1_9"/>
<dbReference type="UniPathway" id="UPA00219"/>
<dbReference type="Proteomes" id="UP000002707">
    <property type="component" value="Chromosome"/>
</dbReference>
<dbReference type="GO" id="GO:0005886">
    <property type="term" value="C:plasma membrane"/>
    <property type="evidence" value="ECO:0007669"/>
    <property type="project" value="UniProtKB-SubCell"/>
</dbReference>
<dbReference type="GO" id="GO:0050511">
    <property type="term" value="F:undecaprenyldiphospho-muramoylpentapeptide beta-N-acetylglucosaminyltransferase activity"/>
    <property type="evidence" value="ECO:0007669"/>
    <property type="project" value="UniProtKB-UniRule"/>
</dbReference>
<dbReference type="GO" id="GO:0005975">
    <property type="term" value="P:carbohydrate metabolic process"/>
    <property type="evidence" value="ECO:0007669"/>
    <property type="project" value="InterPro"/>
</dbReference>
<dbReference type="GO" id="GO:0051301">
    <property type="term" value="P:cell division"/>
    <property type="evidence" value="ECO:0007669"/>
    <property type="project" value="UniProtKB-KW"/>
</dbReference>
<dbReference type="GO" id="GO:0071555">
    <property type="term" value="P:cell wall organization"/>
    <property type="evidence" value="ECO:0007669"/>
    <property type="project" value="UniProtKB-KW"/>
</dbReference>
<dbReference type="GO" id="GO:0030259">
    <property type="term" value="P:lipid glycosylation"/>
    <property type="evidence" value="ECO:0007669"/>
    <property type="project" value="UniProtKB-UniRule"/>
</dbReference>
<dbReference type="GO" id="GO:0009252">
    <property type="term" value="P:peptidoglycan biosynthetic process"/>
    <property type="evidence" value="ECO:0007669"/>
    <property type="project" value="UniProtKB-UniRule"/>
</dbReference>
<dbReference type="GO" id="GO:0008360">
    <property type="term" value="P:regulation of cell shape"/>
    <property type="evidence" value="ECO:0007669"/>
    <property type="project" value="UniProtKB-KW"/>
</dbReference>
<dbReference type="CDD" id="cd03785">
    <property type="entry name" value="GT28_MurG"/>
    <property type="match status" value="1"/>
</dbReference>
<dbReference type="Gene3D" id="3.40.50.2000">
    <property type="entry name" value="Glycogen Phosphorylase B"/>
    <property type="match status" value="2"/>
</dbReference>
<dbReference type="HAMAP" id="MF_00033">
    <property type="entry name" value="MurG"/>
    <property type="match status" value="1"/>
</dbReference>
<dbReference type="InterPro" id="IPR006009">
    <property type="entry name" value="GlcNAc_MurG"/>
</dbReference>
<dbReference type="InterPro" id="IPR007235">
    <property type="entry name" value="Glyco_trans_28_C"/>
</dbReference>
<dbReference type="InterPro" id="IPR004276">
    <property type="entry name" value="GlycoTrans_28_N"/>
</dbReference>
<dbReference type="NCBIfam" id="TIGR01133">
    <property type="entry name" value="murG"/>
    <property type="match status" value="1"/>
</dbReference>
<dbReference type="PANTHER" id="PTHR21015:SF22">
    <property type="entry name" value="GLYCOSYLTRANSFERASE"/>
    <property type="match status" value="1"/>
</dbReference>
<dbReference type="PANTHER" id="PTHR21015">
    <property type="entry name" value="UDP-N-ACETYLGLUCOSAMINE--N-ACETYLMURAMYL-(PENTAPEPTIDE) PYROPHOSPHORYL-UNDECAPRENOL N-ACETYLGLUCOSAMINE TRANSFERASE 1"/>
    <property type="match status" value="1"/>
</dbReference>
<dbReference type="Pfam" id="PF04101">
    <property type="entry name" value="Glyco_tran_28_C"/>
    <property type="match status" value="1"/>
</dbReference>
<dbReference type="Pfam" id="PF03033">
    <property type="entry name" value="Glyco_transf_28"/>
    <property type="match status" value="1"/>
</dbReference>
<dbReference type="SUPFAM" id="SSF53756">
    <property type="entry name" value="UDP-Glycosyltransferase/glycogen phosphorylase"/>
    <property type="match status" value="1"/>
</dbReference>
<feature type="chain" id="PRO_0000225062" description="UDP-N-acetylglucosamine--N-acetylmuramyl-(pentapeptide) pyrophosphoryl-undecaprenol N-acetylglucosamine transferase">
    <location>
        <begin position="1"/>
        <end position="363"/>
    </location>
</feature>
<feature type="binding site" evidence="1">
    <location>
        <begin position="7"/>
        <end position="9"/>
    </location>
    <ligand>
        <name>UDP-N-acetyl-alpha-D-glucosamine</name>
        <dbReference type="ChEBI" id="CHEBI:57705"/>
    </ligand>
</feature>
<feature type="binding site" evidence="1">
    <location>
        <position position="125"/>
    </location>
    <ligand>
        <name>UDP-N-acetyl-alpha-D-glucosamine</name>
        <dbReference type="ChEBI" id="CHEBI:57705"/>
    </ligand>
</feature>
<feature type="binding site" evidence="1">
    <location>
        <position position="196"/>
    </location>
    <ligand>
        <name>UDP-N-acetyl-alpha-D-glucosamine</name>
        <dbReference type="ChEBI" id="CHEBI:57705"/>
    </ligand>
</feature>
<feature type="binding site" evidence="1">
    <location>
        <position position="251"/>
    </location>
    <ligand>
        <name>UDP-N-acetyl-alpha-D-glucosamine</name>
        <dbReference type="ChEBI" id="CHEBI:57705"/>
    </ligand>
</feature>
<feature type="binding site" evidence="1">
    <location>
        <position position="296"/>
    </location>
    <ligand>
        <name>UDP-N-acetyl-alpha-D-glucosamine</name>
        <dbReference type="ChEBI" id="CHEBI:57705"/>
    </ligand>
</feature>
<name>MURG_LATSS</name>
<protein>
    <recommendedName>
        <fullName evidence="1">UDP-N-acetylglucosamine--N-acetylmuramyl-(pentapeptide) pyrophosphoryl-undecaprenol N-acetylglucosamine transferase</fullName>
        <ecNumber evidence="1">2.4.1.227</ecNumber>
    </recommendedName>
    <alternativeName>
        <fullName evidence="1">Undecaprenyl-PP-MurNAc-pentapeptide-UDPGlcNAc GlcNAc transferase</fullName>
    </alternativeName>
</protein>
<gene>
    <name evidence="1" type="primary">murG</name>
    <name type="ordered locus">LCA_0748</name>
</gene>
<evidence type="ECO:0000255" key="1">
    <source>
        <dbReference type="HAMAP-Rule" id="MF_00033"/>
    </source>
</evidence>
<reference key="1">
    <citation type="journal article" date="2005" name="Nat. Biotechnol.">
        <title>The complete genome sequence of the meat-borne lactic acid bacterium Lactobacillus sakei 23K.</title>
        <authorList>
            <person name="Chaillou S."/>
            <person name="Champomier-Verges M.-C."/>
            <person name="Cornet M."/>
            <person name="Crutz-Le Coq A.-M."/>
            <person name="Dudez A.-M."/>
            <person name="Martin V."/>
            <person name="Beaufils S."/>
            <person name="Darbon-Rongere E."/>
            <person name="Bossy R."/>
            <person name="Loux V."/>
            <person name="Zagorec M."/>
        </authorList>
    </citation>
    <scope>NUCLEOTIDE SEQUENCE [LARGE SCALE GENOMIC DNA]</scope>
    <source>
        <strain>23K</strain>
    </source>
</reference>
<sequence length="363" mass="39147">MISGGGTGGHIYPALALIERLKQRGLLDAVLYVGTERGLESKIVPDQGIDFKTLEIQGFKRSMNLNGIKTNLKTIELFMSSIKSAKKMIKEFKPDVVIGTGGYVSGSLLYAASRLKVPTIIHEQNSAAGVTNKFLARFVDKVAISFESVSDQFPMHKVVLTGNPRAQQVAGMVPNERLSEFGLKTDSPTVMIFGGSRGAPSINKAFIDAVPLLNERDYQVLFVSGQVHYENVQAALANTTLNSNLAFVPYISNMPEVLPDLKAIVGRAGATSLAEITALGIPSILIPSPYVTNDHQTKNAQSLVKEDAAMLIPEPELTGASLVKALDTLFETPEKQHAMAKAAKKSGIRDASDRIIEVIETII</sequence>
<comment type="function">
    <text evidence="1">Cell wall formation. Catalyzes the transfer of a GlcNAc subunit on undecaprenyl-pyrophosphoryl-MurNAc-pentapeptide (lipid intermediate I) to form undecaprenyl-pyrophosphoryl-MurNAc-(pentapeptide)GlcNAc (lipid intermediate II).</text>
</comment>
<comment type="catalytic activity">
    <reaction evidence="1">
        <text>Mur2Ac(oyl-L-Ala-gamma-D-Glu-L-Lys-D-Ala-D-Ala)-di-trans,octa-cis-undecaprenyl diphosphate + UDP-N-acetyl-alpha-D-glucosamine = beta-D-GlcNAc-(1-&gt;4)-Mur2Ac(oyl-L-Ala-gamma-D-Glu-L-Lys-D-Ala-D-Ala)-di-trans,octa-cis-undecaprenyl diphosphate + UDP + H(+)</text>
        <dbReference type="Rhea" id="RHEA:23192"/>
        <dbReference type="ChEBI" id="CHEBI:15378"/>
        <dbReference type="ChEBI" id="CHEBI:57705"/>
        <dbReference type="ChEBI" id="CHEBI:58223"/>
        <dbReference type="ChEBI" id="CHEBI:60032"/>
        <dbReference type="ChEBI" id="CHEBI:60033"/>
        <dbReference type="EC" id="2.4.1.227"/>
    </reaction>
</comment>
<comment type="pathway">
    <text evidence="1">Cell wall biogenesis; peptidoglycan biosynthesis.</text>
</comment>
<comment type="subcellular location">
    <subcellularLocation>
        <location evidence="1">Cell membrane</location>
        <topology evidence="1">Peripheral membrane protein</topology>
        <orientation evidence="1">Cytoplasmic side</orientation>
    </subcellularLocation>
</comment>
<comment type="similarity">
    <text evidence="1">Belongs to the glycosyltransferase 28 family. MurG subfamily.</text>
</comment>
<keyword id="KW-0131">Cell cycle</keyword>
<keyword id="KW-0132">Cell division</keyword>
<keyword id="KW-1003">Cell membrane</keyword>
<keyword id="KW-0133">Cell shape</keyword>
<keyword id="KW-0961">Cell wall biogenesis/degradation</keyword>
<keyword id="KW-0328">Glycosyltransferase</keyword>
<keyword id="KW-0472">Membrane</keyword>
<keyword id="KW-0573">Peptidoglycan synthesis</keyword>
<keyword id="KW-1185">Reference proteome</keyword>
<keyword id="KW-0808">Transferase</keyword>